<protein>
    <recommendedName>
        <fullName>Zein-alpha M6</fullName>
    </recommendedName>
    <alternativeName>
        <fullName>19 kDa zein M6</fullName>
    </alternativeName>
</protein>
<evidence type="ECO:0000250" key="1">
    <source>
        <dbReference type="UniProtKB" id="P04698"/>
    </source>
</evidence>
<evidence type="ECO:0000305" key="2"/>
<proteinExistence type="evidence at transcript level"/>
<reference key="1">
    <citation type="journal article" date="1985" name="EMBO J.">
        <title>Each zein gene class can produce polypeptides of different sizes.</title>
        <authorList>
            <person name="Viotti A."/>
            <person name="Cairo G."/>
            <person name="Vitale A."/>
            <person name="Sala E."/>
        </authorList>
    </citation>
    <scope>NUCLEOTIDE SEQUENCE [MRNA]</scope>
</reference>
<sequence length="240" mass="26255">MATKIFSLLMLLALSTCVANATIFPQCSQAPIASLLPPYLPSIIASICENPALQPYRLQQAIAASNIPSSPLLFQQSPALSLVQSLVQTIRAQQLQQLVLPLINQVVLANLSPYSQQQQFLPFNQLSTLNPAAYLQQQLLPSSQLATAYCQQQQLLPFNQLAALNPAAYLQQQILLPFSQLAAANRASFLTQQQLLLFYQQFAANPATLLQLQQLLPFVQLALTDPAASYQQHIIGGALF</sequence>
<keyword id="KW-1185">Reference proteome</keyword>
<keyword id="KW-0677">Repeat</keyword>
<keyword id="KW-0708">Seed storage protein</keyword>
<keyword id="KW-0732">Signal</keyword>
<keyword id="KW-0758">Storage protein</keyword>
<accession>P04702</accession>
<comment type="function">
    <text>Zeins are major seed storage proteins.</text>
</comment>
<comment type="miscellaneous">
    <text>The alpha zeins of 19 kDa and 22 kDa account for 70% of the total zein fraction. They are encoded by a large multigene family.</text>
</comment>
<comment type="miscellaneous">
    <text evidence="1">Structurally, 22K and 19K zeins are composed of nine adjacent, topologically antiparallel helices clustered within a distorted cylinder.</text>
</comment>
<comment type="similarity">
    <text evidence="2">Belongs to the zein family.</text>
</comment>
<name>ZEA6_MAIZE</name>
<organism>
    <name type="scientific">Zea mays</name>
    <name type="common">Maize</name>
    <dbReference type="NCBI Taxonomy" id="4577"/>
    <lineage>
        <taxon>Eukaryota</taxon>
        <taxon>Viridiplantae</taxon>
        <taxon>Streptophyta</taxon>
        <taxon>Embryophyta</taxon>
        <taxon>Tracheophyta</taxon>
        <taxon>Spermatophyta</taxon>
        <taxon>Magnoliopsida</taxon>
        <taxon>Liliopsida</taxon>
        <taxon>Poales</taxon>
        <taxon>Poaceae</taxon>
        <taxon>PACMAD clade</taxon>
        <taxon>Panicoideae</taxon>
        <taxon>Andropogonodae</taxon>
        <taxon>Andropogoneae</taxon>
        <taxon>Tripsacinae</taxon>
        <taxon>Zea</taxon>
    </lineage>
</organism>
<feature type="signal peptide">
    <location>
        <begin position="1"/>
        <end position="21"/>
    </location>
</feature>
<feature type="chain" id="PRO_0000041616" description="Zein-alpha M6">
    <location>
        <begin position="22"/>
        <end position="240"/>
    </location>
</feature>
<dbReference type="EMBL" id="X02450">
    <property type="protein sequence ID" value="CAA26294.1"/>
    <property type="molecule type" value="mRNA"/>
</dbReference>
<dbReference type="PIR" id="A22831">
    <property type="entry name" value="A22831"/>
</dbReference>
<dbReference type="MaizeGDB" id="58096"/>
<dbReference type="InParanoid" id="P04702"/>
<dbReference type="Proteomes" id="UP000007305">
    <property type="component" value="Unplaced"/>
</dbReference>
<dbReference type="ExpressionAtlas" id="P04702">
    <property type="expression patterns" value="baseline and differential"/>
</dbReference>
<dbReference type="GO" id="GO:0045735">
    <property type="term" value="F:nutrient reservoir activity"/>
    <property type="evidence" value="ECO:0007669"/>
    <property type="project" value="UniProtKB-KW"/>
</dbReference>
<dbReference type="InterPro" id="IPR052508">
    <property type="entry name" value="Maize_Zein_Storage"/>
</dbReference>
<dbReference type="InterPro" id="IPR002530">
    <property type="entry name" value="Zein"/>
</dbReference>
<dbReference type="PANTHER" id="PTHR48244:SF2">
    <property type="entry name" value="ZEIN-ALPHA 19C2"/>
    <property type="match status" value="1"/>
</dbReference>
<dbReference type="PANTHER" id="PTHR48244">
    <property type="entry name" value="ZEIN-ALPHA A20-RELATED"/>
    <property type="match status" value="1"/>
</dbReference>
<dbReference type="Pfam" id="PF01559">
    <property type="entry name" value="Zein"/>
    <property type="match status" value="1"/>
</dbReference>